<accession>A7FF21</accession>
<dbReference type="EC" id="1.4.4.2" evidence="1"/>
<dbReference type="EMBL" id="CP000720">
    <property type="protein sequence ID" value="ABS47750.1"/>
    <property type="molecule type" value="Genomic_DNA"/>
</dbReference>
<dbReference type="RefSeq" id="WP_002209947.1">
    <property type="nucleotide sequence ID" value="NC_009708.1"/>
</dbReference>
<dbReference type="SMR" id="A7FF21"/>
<dbReference type="GeneID" id="57973735"/>
<dbReference type="KEGG" id="ypi:YpsIP31758_0865"/>
<dbReference type="HOGENOM" id="CLU_004620_3_2_6"/>
<dbReference type="Proteomes" id="UP000002412">
    <property type="component" value="Chromosome"/>
</dbReference>
<dbReference type="GO" id="GO:0005829">
    <property type="term" value="C:cytosol"/>
    <property type="evidence" value="ECO:0007669"/>
    <property type="project" value="TreeGrafter"/>
</dbReference>
<dbReference type="GO" id="GO:0005960">
    <property type="term" value="C:glycine cleavage complex"/>
    <property type="evidence" value="ECO:0007669"/>
    <property type="project" value="TreeGrafter"/>
</dbReference>
<dbReference type="GO" id="GO:0016594">
    <property type="term" value="F:glycine binding"/>
    <property type="evidence" value="ECO:0007669"/>
    <property type="project" value="TreeGrafter"/>
</dbReference>
<dbReference type="GO" id="GO:0004375">
    <property type="term" value="F:glycine dehydrogenase (decarboxylating) activity"/>
    <property type="evidence" value="ECO:0007669"/>
    <property type="project" value="UniProtKB-EC"/>
</dbReference>
<dbReference type="GO" id="GO:0030170">
    <property type="term" value="F:pyridoxal phosphate binding"/>
    <property type="evidence" value="ECO:0007669"/>
    <property type="project" value="TreeGrafter"/>
</dbReference>
<dbReference type="GO" id="GO:0019464">
    <property type="term" value="P:glycine decarboxylation via glycine cleavage system"/>
    <property type="evidence" value="ECO:0007669"/>
    <property type="project" value="UniProtKB-UniRule"/>
</dbReference>
<dbReference type="CDD" id="cd00613">
    <property type="entry name" value="GDC-P"/>
    <property type="match status" value="2"/>
</dbReference>
<dbReference type="FunFam" id="3.40.640.10:FF:000005">
    <property type="entry name" value="Glycine dehydrogenase (decarboxylating), mitochondrial"/>
    <property type="match status" value="1"/>
</dbReference>
<dbReference type="FunFam" id="3.90.1150.10:FF:000007">
    <property type="entry name" value="Glycine dehydrogenase (decarboxylating), mitochondrial"/>
    <property type="match status" value="1"/>
</dbReference>
<dbReference type="FunFam" id="3.40.640.10:FF:000007">
    <property type="entry name" value="glycine dehydrogenase (Decarboxylating), mitochondrial"/>
    <property type="match status" value="1"/>
</dbReference>
<dbReference type="Gene3D" id="3.90.1150.10">
    <property type="entry name" value="Aspartate Aminotransferase, domain 1"/>
    <property type="match status" value="2"/>
</dbReference>
<dbReference type="Gene3D" id="3.40.640.10">
    <property type="entry name" value="Type I PLP-dependent aspartate aminotransferase-like (Major domain)"/>
    <property type="match status" value="2"/>
</dbReference>
<dbReference type="HAMAP" id="MF_00711">
    <property type="entry name" value="GcvP"/>
    <property type="match status" value="1"/>
</dbReference>
<dbReference type="InterPro" id="IPR003437">
    <property type="entry name" value="GcvP"/>
</dbReference>
<dbReference type="InterPro" id="IPR049316">
    <property type="entry name" value="GDC-P_C"/>
</dbReference>
<dbReference type="InterPro" id="IPR049315">
    <property type="entry name" value="GDC-P_N"/>
</dbReference>
<dbReference type="InterPro" id="IPR020581">
    <property type="entry name" value="GDC_P"/>
</dbReference>
<dbReference type="InterPro" id="IPR015424">
    <property type="entry name" value="PyrdxlP-dep_Trfase"/>
</dbReference>
<dbReference type="InterPro" id="IPR015421">
    <property type="entry name" value="PyrdxlP-dep_Trfase_major"/>
</dbReference>
<dbReference type="InterPro" id="IPR015422">
    <property type="entry name" value="PyrdxlP-dep_Trfase_small"/>
</dbReference>
<dbReference type="NCBIfam" id="TIGR00461">
    <property type="entry name" value="gcvP"/>
    <property type="match status" value="1"/>
</dbReference>
<dbReference type="NCBIfam" id="NF003346">
    <property type="entry name" value="PRK04366.1"/>
    <property type="match status" value="1"/>
</dbReference>
<dbReference type="PANTHER" id="PTHR11773:SF13">
    <property type="entry name" value="GLYCINE DEHYDROGENASE (DECARBOXYLATING)"/>
    <property type="match status" value="1"/>
</dbReference>
<dbReference type="PANTHER" id="PTHR11773">
    <property type="entry name" value="GLYCINE DEHYDROGENASE, DECARBOXYLATING"/>
    <property type="match status" value="1"/>
</dbReference>
<dbReference type="Pfam" id="PF21478">
    <property type="entry name" value="GcvP2_C"/>
    <property type="match status" value="1"/>
</dbReference>
<dbReference type="Pfam" id="PF02347">
    <property type="entry name" value="GDC-P"/>
    <property type="match status" value="2"/>
</dbReference>
<dbReference type="SUPFAM" id="SSF53383">
    <property type="entry name" value="PLP-dependent transferases"/>
    <property type="match status" value="2"/>
</dbReference>
<protein>
    <recommendedName>
        <fullName evidence="1">Glycine dehydrogenase (decarboxylating)</fullName>
        <ecNumber evidence="1">1.4.4.2</ecNumber>
    </recommendedName>
    <alternativeName>
        <fullName evidence="1">Glycine cleavage system P-protein</fullName>
    </alternativeName>
    <alternativeName>
        <fullName evidence="1">Glycine decarboxylase</fullName>
    </alternativeName>
    <alternativeName>
        <fullName evidence="1">Glycine dehydrogenase (aminomethyl-transferring)</fullName>
    </alternativeName>
</protein>
<sequence>MTQNLSQLEHNDAFIQRHIGSSVEQQQQMLAAVGASSLSTLIQQIVPADIQLPGPPPVGEAATEHQALAELKGIASQNQCYKSYIGMGYSPVLTPPVILRNMLENPGWYTAYTPYQPEVSQGRLEALLNFQQLTQDLTGLDLASASLLDEATAAAESMALAKRASKLKDANRFFVADDVHPQTLDVVLTRAETFGFDVIVDRAEKVLELDGIFGVLLQQVGTTGELHDYSALLAELKKRKIITSVAADIMALVLLTAPGAQGADVVFGSAQRFGVPMGYGGPHAAFFACRDEFKRSMPGRIIGVSRDAAGNTALRMAMQTREQHIRREKANSNICTSQVLLANIASLYAVYHGPQGLQRIAGRIHRMTDILAAGLQHAGLTLRFKHWFDTLTVEVKDKAAVLARALSFGINLRTDIHGAVGITLNETTSREDIQTLFALFVGDNHGLDIDQLDAAVSQHSQSIQDSMLRRDPILTHPVFNRYHSETEMMRYMHRLERKDLALNQAMIPLGSCTMKLNAAAEMIPITWPEFAELHPFCPPEQAAGYQQMIGQLSQWLVQLTGYDAVCMQPNSGAQGEYAGLLAIRRYHESRNQANRHICLIPSSAHGTNPASAQMAGMSVVVVACDKQGNIDLHDLRQKAEHAGDELSCIMVTYPSTHGVYEETIREVCQIVHQFGGQVYLDGANMNAQVGITTPGYIGADVSHLNLHKTFCIPHGGGGPGMGPIGVKAHLAPFVPGHSVVQIDGMTTQQGAVSAAPFGSASILPISWMYIRMMGADGLKQASQVAILNANYIATRLKNAYPVLYTGHDGRVAHECILDIRPLKEATGISEMDIAKRLIDFGFHAPTMSFPVAGTLMVEPTESESKVELDRFIDAMLAIRAEIEKVAQGEWPLEDNPLVNAPHTQAELVGEWTHPYSRELAVFPVAGVLENKYWPTVKRLDDVYGDRNLFCSCVPISDYE</sequence>
<feature type="chain" id="PRO_1000062078" description="Glycine dehydrogenase (decarboxylating)">
    <location>
        <begin position="1"/>
        <end position="959"/>
    </location>
</feature>
<feature type="modified residue" description="N6-(pyridoxal phosphate)lysine" evidence="1">
    <location>
        <position position="708"/>
    </location>
</feature>
<evidence type="ECO:0000255" key="1">
    <source>
        <dbReference type="HAMAP-Rule" id="MF_00711"/>
    </source>
</evidence>
<proteinExistence type="inferred from homology"/>
<keyword id="KW-0560">Oxidoreductase</keyword>
<keyword id="KW-0663">Pyridoxal phosphate</keyword>
<organism>
    <name type="scientific">Yersinia pseudotuberculosis serotype O:1b (strain IP 31758)</name>
    <dbReference type="NCBI Taxonomy" id="349747"/>
    <lineage>
        <taxon>Bacteria</taxon>
        <taxon>Pseudomonadati</taxon>
        <taxon>Pseudomonadota</taxon>
        <taxon>Gammaproteobacteria</taxon>
        <taxon>Enterobacterales</taxon>
        <taxon>Yersiniaceae</taxon>
        <taxon>Yersinia</taxon>
    </lineage>
</organism>
<comment type="function">
    <text evidence="1">The glycine cleavage system catalyzes the degradation of glycine. The P protein binds the alpha-amino group of glycine through its pyridoxal phosphate cofactor; CO(2) is released and the remaining methylamine moiety is then transferred to the lipoamide cofactor of the H protein.</text>
</comment>
<comment type="catalytic activity">
    <reaction evidence="1">
        <text>N(6)-[(R)-lipoyl]-L-lysyl-[glycine-cleavage complex H protein] + glycine + H(+) = N(6)-[(R)-S(8)-aminomethyldihydrolipoyl]-L-lysyl-[glycine-cleavage complex H protein] + CO2</text>
        <dbReference type="Rhea" id="RHEA:24304"/>
        <dbReference type="Rhea" id="RHEA-COMP:10494"/>
        <dbReference type="Rhea" id="RHEA-COMP:10495"/>
        <dbReference type="ChEBI" id="CHEBI:15378"/>
        <dbReference type="ChEBI" id="CHEBI:16526"/>
        <dbReference type="ChEBI" id="CHEBI:57305"/>
        <dbReference type="ChEBI" id="CHEBI:83099"/>
        <dbReference type="ChEBI" id="CHEBI:83143"/>
        <dbReference type="EC" id="1.4.4.2"/>
    </reaction>
</comment>
<comment type="cofactor">
    <cofactor evidence="1">
        <name>pyridoxal 5'-phosphate</name>
        <dbReference type="ChEBI" id="CHEBI:597326"/>
    </cofactor>
</comment>
<comment type="subunit">
    <text evidence="1">The glycine cleavage system is composed of four proteins: P, T, L and H.</text>
</comment>
<comment type="similarity">
    <text evidence="1">Belongs to the GcvP family.</text>
</comment>
<reference key="1">
    <citation type="journal article" date="2007" name="PLoS Genet.">
        <title>The complete genome sequence of Yersinia pseudotuberculosis IP31758, the causative agent of Far East scarlet-like fever.</title>
        <authorList>
            <person name="Eppinger M."/>
            <person name="Rosovitz M.J."/>
            <person name="Fricke W.F."/>
            <person name="Rasko D.A."/>
            <person name="Kokorina G."/>
            <person name="Fayolle C."/>
            <person name="Lindler L.E."/>
            <person name="Carniel E."/>
            <person name="Ravel J."/>
        </authorList>
    </citation>
    <scope>NUCLEOTIDE SEQUENCE [LARGE SCALE GENOMIC DNA]</scope>
    <source>
        <strain>IP 31758</strain>
    </source>
</reference>
<gene>
    <name evidence="1" type="primary">gcvP</name>
    <name type="ordered locus">YpsIP31758_0865</name>
</gene>
<name>GCSP_YERP3</name>